<evidence type="ECO:0000255" key="1">
    <source>
        <dbReference type="PROSITE-ProRule" id="PRU01182"/>
    </source>
</evidence>
<evidence type="ECO:0000305" key="2"/>
<feature type="chain" id="PRO_0000190762" description="UPF0758 protein YeeS">
    <location>
        <begin position="1"/>
        <end position="148"/>
    </location>
</feature>
<feature type="domain" description="MPN" evidence="1">
    <location>
        <begin position="26"/>
        <end position="148"/>
    </location>
</feature>
<feature type="short sequence motif" description="JAMM motif" evidence="1">
    <location>
        <begin position="97"/>
        <end position="110"/>
    </location>
</feature>
<feature type="binding site" evidence="1">
    <location>
        <position position="97"/>
    </location>
    <ligand>
        <name>Zn(2+)</name>
        <dbReference type="ChEBI" id="CHEBI:29105"/>
        <note>catalytic</note>
    </ligand>
</feature>
<feature type="binding site" evidence="1">
    <location>
        <position position="99"/>
    </location>
    <ligand>
        <name>Zn(2+)</name>
        <dbReference type="ChEBI" id="CHEBI:29105"/>
        <note>catalytic</note>
    </ligand>
</feature>
<feature type="binding site" evidence="1">
    <location>
        <position position="110"/>
    </location>
    <ligand>
        <name>Zn(2+)</name>
        <dbReference type="ChEBI" id="CHEBI:29105"/>
        <note>catalytic</note>
    </ligand>
</feature>
<name>YEES_ECOLI</name>
<keyword id="KW-0378">Hydrolase</keyword>
<keyword id="KW-0479">Metal-binding</keyword>
<keyword id="KW-0482">Metalloprotease</keyword>
<keyword id="KW-0645">Protease</keyword>
<keyword id="KW-1185">Reference proteome</keyword>
<keyword id="KW-0862">Zinc</keyword>
<protein>
    <recommendedName>
        <fullName>UPF0758 protein YeeS</fullName>
    </recommendedName>
</protein>
<dbReference type="EMBL" id="U00096">
    <property type="protein sequence ID" value="AAC75063.1"/>
    <property type="molecule type" value="Genomic_DNA"/>
</dbReference>
<dbReference type="EMBL" id="AP009048">
    <property type="protein sequence ID" value="BAA15826.1"/>
    <property type="molecule type" value="Genomic_DNA"/>
</dbReference>
<dbReference type="PIR" id="A64965">
    <property type="entry name" value="A64965"/>
</dbReference>
<dbReference type="RefSeq" id="NP_416506.1">
    <property type="nucleotide sequence ID" value="NC_000913.3"/>
</dbReference>
<dbReference type="RefSeq" id="WP_000187523.1">
    <property type="nucleotide sequence ID" value="NZ_LN832404.1"/>
</dbReference>
<dbReference type="SMR" id="P76362"/>
<dbReference type="BioGRID" id="4261548">
    <property type="interactions" value="176"/>
</dbReference>
<dbReference type="FunCoup" id="P76362">
    <property type="interactions" value="44"/>
</dbReference>
<dbReference type="STRING" id="511145.b2002"/>
<dbReference type="PaxDb" id="511145-b2002"/>
<dbReference type="EnsemblBacteria" id="AAC75063">
    <property type="protein sequence ID" value="AAC75063"/>
    <property type="gene ID" value="b2002"/>
</dbReference>
<dbReference type="GeneID" id="946514"/>
<dbReference type="KEGG" id="ecj:JW1984"/>
<dbReference type="KEGG" id="eco:b2002"/>
<dbReference type="KEGG" id="ecoc:C3026_11290"/>
<dbReference type="PATRIC" id="fig|1411691.4.peg.251"/>
<dbReference type="EchoBASE" id="EB3167"/>
<dbReference type="eggNOG" id="COG2003">
    <property type="taxonomic scope" value="Bacteria"/>
</dbReference>
<dbReference type="HOGENOM" id="CLU_073529_3_1_6"/>
<dbReference type="InParanoid" id="P76362"/>
<dbReference type="OMA" id="KEGTICY"/>
<dbReference type="OrthoDB" id="9804482at2"/>
<dbReference type="PhylomeDB" id="P76362"/>
<dbReference type="BioCyc" id="EcoCyc:G7082-MONOMER"/>
<dbReference type="PRO" id="PR:P76362"/>
<dbReference type="Proteomes" id="UP000000625">
    <property type="component" value="Chromosome"/>
</dbReference>
<dbReference type="GO" id="GO:0046872">
    <property type="term" value="F:metal ion binding"/>
    <property type="evidence" value="ECO:0007669"/>
    <property type="project" value="UniProtKB-KW"/>
</dbReference>
<dbReference type="GO" id="GO:0008237">
    <property type="term" value="F:metallopeptidase activity"/>
    <property type="evidence" value="ECO:0007669"/>
    <property type="project" value="UniProtKB-KW"/>
</dbReference>
<dbReference type="GO" id="GO:0006508">
    <property type="term" value="P:proteolysis"/>
    <property type="evidence" value="ECO:0007669"/>
    <property type="project" value="UniProtKB-KW"/>
</dbReference>
<dbReference type="CDD" id="cd08071">
    <property type="entry name" value="MPN_DUF2466"/>
    <property type="match status" value="1"/>
</dbReference>
<dbReference type="Gene3D" id="3.40.140.10">
    <property type="entry name" value="Cytidine Deaminase, domain 2"/>
    <property type="match status" value="1"/>
</dbReference>
<dbReference type="InterPro" id="IPR037518">
    <property type="entry name" value="MPN"/>
</dbReference>
<dbReference type="InterPro" id="IPR025657">
    <property type="entry name" value="RadC_JAB"/>
</dbReference>
<dbReference type="InterPro" id="IPR001405">
    <property type="entry name" value="UPF0758"/>
</dbReference>
<dbReference type="InterPro" id="IPR020891">
    <property type="entry name" value="UPF0758_CS"/>
</dbReference>
<dbReference type="NCBIfam" id="TIGR00608">
    <property type="entry name" value="radc"/>
    <property type="match status" value="1"/>
</dbReference>
<dbReference type="PANTHER" id="PTHR30471">
    <property type="entry name" value="DNA REPAIR PROTEIN RADC"/>
    <property type="match status" value="1"/>
</dbReference>
<dbReference type="PANTHER" id="PTHR30471:SF3">
    <property type="entry name" value="UPF0758 PROTEIN YEES-RELATED"/>
    <property type="match status" value="1"/>
</dbReference>
<dbReference type="Pfam" id="PF04002">
    <property type="entry name" value="RadC"/>
    <property type="match status" value="1"/>
</dbReference>
<dbReference type="SUPFAM" id="SSF102712">
    <property type="entry name" value="JAB1/MPN domain"/>
    <property type="match status" value="1"/>
</dbReference>
<dbReference type="PROSITE" id="PS50249">
    <property type="entry name" value="MPN"/>
    <property type="match status" value="1"/>
</dbReference>
<dbReference type="PROSITE" id="PS01302">
    <property type="entry name" value="UPF0758"/>
    <property type="match status" value="1"/>
</dbReference>
<proteinExistence type="inferred from homology"/>
<gene>
    <name type="primary">yeeS</name>
    <name type="ordered locus">b2002</name>
    <name type="ordered locus">JW1984</name>
</gene>
<accession>P76362</accession>
<accession>O07990</accession>
<accession>O07993</accession>
<sequence>MTPGERSLIQRALKTLDRHLHEPGVAFTSTRAAREWLILNMAGLEREEFRVLYLNNQNQLIAGETLFTGTINRTEVHPREVIKRALYHNAAAVVLAHNHPSGEVTPSKADRLITERLVQALGLVDIRVPDHLIVGGNQVFSFAEHGLL</sequence>
<reference key="1">
    <citation type="journal article" date="1996" name="DNA Res.">
        <title>A 460-kb DNA sequence of the Escherichia coli K-12 genome corresponding to the 40.1-50.0 min region on the linkage map.</title>
        <authorList>
            <person name="Itoh T."/>
            <person name="Aiba H."/>
            <person name="Baba T."/>
            <person name="Fujita K."/>
            <person name="Hayashi K."/>
            <person name="Inada T."/>
            <person name="Isono K."/>
            <person name="Kasai H."/>
            <person name="Kimura S."/>
            <person name="Kitakawa M."/>
            <person name="Kitagawa M."/>
            <person name="Makino K."/>
            <person name="Miki T."/>
            <person name="Mizobuchi K."/>
            <person name="Mori H."/>
            <person name="Mori T."/>
            <person name="Motomura K."/>
            <person name="Nakade S."/>
            <person name="Nakamura Y."/>
            <person name="Nashimoto H."/>
            <person name="Nishio Y."/>
            <person name="Oshima T."/>
            <person name="Saito N."/>
            <person name="Sampei G."/>
            <person name="Seki Y."/>
            <person name="Sivasundaram S."/>
            <person name="Tagami H."/>
            <person name="Takeda J."/>
            <person name="Takemoto K."/>
            <person name="Wada C."/>
            <person name="Yamamoto Y."/>
            <person name="Horiuchi T."/>
        </authorList>
    </citation>
    <scope>NUCLEOTIDE SEQUENCE [LARGE SCALE GENOMIC DNA]</scope>
    <source>
        <strain>K12 / W3110 / ATCC 27325 / DSM 5911</strain>
    </source>
</reference>
<reference key="2">
    <citation type="journal article" date="1997" name="Science">
        <title>The complete genome sequence of Escherichia coli K-12.</title>
        <authorList>
            <person name="Blattner F.R."/>
            <person name="Plunkett G. III"/>
            <person name="Bloch C.A."/>
            <person name="Perna N.T."/>
            <person name="Burland V."/>
            <person name="Riley M."/>
            <person name="Collado-Vides J."/>
            <person name="Glasner J.D."/>
            <person name="Rode C.K."/>
            <person name="Mayhew G.F."/>
            <person name="Gregor J."/>
            <person name="Davis N.W."/>
            <person name="Kirkpatrick H.A."/>
            <person name="Goeden M.A."/>
            <person name="Rose D.J."/>
            <person name="Mau B."/>
            <person name="Shao Y."/>
        </authorList>
    </citation>
    <scope>NUCLEOTIDE SEQUENCE [LARGE SCALE GENOMIC DNA]</scope>
    <source>
        <strain>K12 / MG1655 / ATCC 47076</strain>
    </source>
</reference>
<reference key="3">
    <citation type="journal article" date="2006" name="Mol. Syst. Biol.">
        <title>Highly accurate genome sequences of Escherichia coli K-12 strains MG1655 and W3110.</title>
        <authorList>
            <person name="Hayashi K."/>
            <person name="Morooka N."/>
            <person name="Yamamoto Y."/>
            <person name="Fujita K."/>
            <person name="Isono K."/>
            <person name="Choi S."/>
            <person name="Ohtsubo E."/>
            <person name="Baba T."/>
            <person name="Wanner B.L."/>
            <person name="Mori H."/>
            <person name="Horiuchi T."/>
        </authorList>
    </citation>
    <scope>NUCLEOTIDE SEQUENCE [LARGE SCALE GENOMIC DNA]</scope>
    <source>
        <strain>K12 / W3110 / ATCC 27325 / DSM 5911</strain>
    </source>
</reference>
<comment type="similarity">
    <text evidence="2">Belongs to the UPF0758 family.</text>
</comment>
<organism>
    <name type="scientific">Escherichia coli (strain K12)</name>
    <dbReference type="NCBI Taxonomy" id="83333"/>
    <lineage>
        <taxon>Bacteria</taxon>
        <taxon>Pseudomonadati</taxon>
        <taxon>Pseudomonadota</taxon>
        <taxon>Gammaproteobacteria</taxon>
        <taxon>Enterobacterales</taxon>
        <taxon>Enterobacteriaceae</taxon>
        <taxon>Escherichia</taxon>
    </lineage>
</organism>